<reference key="1">
    <citation type="journal article" date="2005" name="Nature">
        <title>Genome sequencing and analysis of Aspergillus oryzae.</title>
        <authorList>
            <person name="Machida M."/>
            <person name="Asai K."/>
            <person name="Sano M."/>
            <person name="Tanaka T."/>
            <person name="Kumagai T."/>
            <person name="Terai G."/>
            <person name="Kusumoto K."/>
            <person name="Arima T."/>
            <person name="Akita O."/>
            <person name="Kashiwagi Y."/>
            <person name="Abe K."/>
            <person name="Gomi K."/>
            <person name="Horiuchi H."/>
            <person name="Kitamoto K."/>
            <person name="Kobayashi T."/>
            <person name="Takeuchi M."/>
            <person name="Denning D.W."/>
            <person name="Galagan J.E."/>
            <person name="Nierman W.C."/>
            <person name="Yu J."/>
            <person name="Archer D.B."/>
            <person name="Bennett J.W."/>
            <person name="Bhatnagar D."/>
            <person name="Cleveland T.E."/>
            <person name="Fedorova N.D."/>
            <person name="Gotoh O."/>
            <person name="Horikawa H."/>
            <person name="Hosoyama A."/>
            <person name="Ichinomiya M."/>
            <person name="Igarashi R."/>
            <person name="Iwashita K."/>
            <person name="Juvvadi P.R."/>
            <person name="Kato M."/>
            <person name="Kato Y."/>
            <person name="Kin T."/>
            <person name="Kokubun A."/>
            <person name="Maeda H."/>
            <person name="Maeyama N."/>
            <person name="Maruyama J."/>
            <person name="Nagasaki H."/>
            <person name="Nakajima T."/>
            <person name="Oda K."/>
            <person name="Okada K."/>
            <person name="Paulsen I."/>
            <person name="Sakamoto K."/>
            <person name="Sawano T."/>
            <person name="Takahashi M."/>
            <person name="Takase K."/>
            <person name="Terabayashi Y."/>
            <person name="Wortman J.R."/>
            <person name="Yamada O."/>
            <person name="Yamagata Y."/>
            <person name="Anazawa H."/>
            <person name="Hata Y."/>
            <person name="Koide Y."/>
            <person name="Komori T."/>
            <person name="Koyama Y."/>
            <person name="Minetoki T."/>
            <person name="Suharnan S."/>
            <person name="Tanaka A."/>
            <person name="Isono K."/>
            <person name="Kuhara S."/>
            <person name="Ogasawara N."/>
            <person name="Kikuchi H."/>
        </authorList>
    </citation>
    <scope>NUCLEOTIDE SEQUENCE [LARGE SCALE GENOMIC DNA]</scope>
    <source>
        <strain>ATCC 42149 / RIB 40</strain>
    </source>
</reference>
<protein>
    <recommendedName>
        <fullName>Protein efr3</fullName>
    </recommendedName>
</protein>
<feature type="chain" id="PRO_0000270771" description="Protein efr3">
    <location>
        <begin position="1"/>
        <end position="1147"/>
    </location>
</feature>
<feature type="region of interest" description="Disordered" evidence="1">
    <location>
        <begin position="582"/>
        <end position="615"/>
    </location>
</feature>
<feature type="region of interest" description="Disordered" evidence="1">
    <location>
        <begin position="877"/>
        <end position="929"/>
    </location>
</feature>
<feature type="region of interest" description="Disordered" evidence="1">
    <location>
        <begin position="942"/>
        <end position="1097"/>
    </location>
</feature>
<feature type="region of interest" description="Disordered" evidence="1">
    <location>
        <begin position="1114"/>
        <end position="1147"/>
    </location>
</feature>
<feature type="compositionally biased region" description="Basic and acidic residues" evidence="1">
    <location>
        <begin position="598"/>
        <end position="607"/>
    </location>
</feature>
<feature type="compositionally biased region" description="Low complexity" evidence="1">
    <location>
        <begin position="883"/>
        <end position="897"/>
    </location>
</feature>
<feature type="compositionally biased region" description="Polar residues" evidence="1">
    <location>
        <begin position="903"/>
        <end position="926"/>
    </location>
</feature>
<feature type="compositionally biased region" description="Low complexity" evidence="1">
    <location>
        <begin position="959"/>
        <end position="978"/>
    </location>
</feature>
<feature type="compositionally biased region" description="Polar residues" evidence="1">
    <location>
        <begin position="1057"/>
        <end position="1072"/>
    </location>
</feature>
<feature type="compositionally biased region" description="Gly residues" evidence="1">
    <location>
        <begin position="1137"/>
        <end position="1147"/>
    </location>
</feature>
<keyword id="KW-1185">Reference proteome</keyword>
<gene>
    <name type="primary">efr3</name>
    <name type="ORF">AO090012000722</name>
</gene>
<accession>Q2UC64</accession>
<sequence length="1147" mass="124455">MEGVRQKCRPKHQVLVLKCYPQYQKGVQVVKPNSSELSYLLYYVSTRRSKLTKVGAFLEKRAARDVWRRKIGNVQVTLQILSALIEKVPRDLPIYARSVMTVLETVVRSQDISMVEDSIETFETFCRHQDMAALSAEQDFATQYREVVRSYAGFAEGDPSTQSKLAAGPPLTVRWKTAGLRAIKGVVSSEAGLAADGGDSIRVILPVILENLYSPEDNLVGSLELKLLEADKNESETAHRRRVSTATVETVDAVEGDASLAAQNTADMDRKAEMDMRLLALRCLEQIVVNGSSRGQIRVTTQVVLDFILRKSRVTGNGLGHNHKDSWATSLIELIAKWCPVQVRFIILVAAMDILHDIPPTEESLDESFAITYLIDRLLKSPVNMIGLSVIDVLLGLLRHMSFLISPSRAGKSTPDEKQNGHSNALELSVKRTEVLSLLQDCIGNLTTHIYYGEQVVDMVRTILTRFRPSRGNEQAITSSPTQSDVLGGASAMISSGEDGLIAFSLPNAKITALRAIKNILLVANTKRPGFTVTTESRHQVGLYVWEGTQWLLSEPDRDVRYAYVDAFLTWLNLETSTDDLKVKERTGRPASQPAKNDLSDPTERPGKRTASMSGNQREKVILIAQSNFLRLLHLTIFDLATDHPTSVSEITLLHLLLVSLVKHLGVNAVRFGLPMVLKLQDNMTTGDGQSFPALVNIGSLVYGYLWALSEKFDLDTSRIGNGIQSEVQKRQQLGVWLETIRLPPVNLDKIIHNSNVQASGRGAQDVSLLIPFDGGEELIQRIEASYGSFITLLTHSPPSSPGSVGSPPRSITAPVLPHVSASAATPKANVLPPAVREQMLSPWSREACLAAAENERAEAKSLSRSRTGTLVMRNHVHQNGTSSPSASSNASVPQSAYASAAGLQNAQRTSVPNSSGSQLISTSRESPVHVNELRRVLSVNEEGKARRMSPLRGRLDGSNRSVISSSSDSMVSGYSLSEFDDGASVKPQSTRGGRISLDGEETPKASALSFMADTNDIPPVPPIPPSISIQGGLTDGRQRSVSASRPSTAPGPRRPSVTNGKAGTPSTSPGRSLSRDKSRSSTGLAAAATDGVEPNAEKIDSARLDVQKLLDGFLSPADAETRGSRRKARSNTGRRGVSGGLGRPPY</sequence>
<proteinExistence type="inferred from homology"/>
<organism>
    <name type="scientific">Aspergillus oryzae (strain ATCC 42149 / RIB 40)</name>
    <name type="common">Yellow koji mold</name>
    <dbReference type="NCBI Taxonomy" id="510516"/>
    <lineage>
        <taxon>Eukaryota</taxon>
        <taxon>Fungi</taxon>
        <taxon>Dikarya</taxon>
        <taxon>Ascomycota</taxon>
        <taxon>Pezizomycotina</taxon>
        <taxon>Eurotiomycetes</taxon>
        <taxon>Eurotiomycetidae</taxon>
        <taxon>Eurotiales</taxon>
        <taxon>Aspergillaceae</taxon>
        <taxon>Aspergillus</taxon>
        <taxon>Aspergillus subgen. Circumdati</taxon>
    </lineage>
</organism>
<comment type="similarity">
    <text evidence="2">Belongs to the EFR3 family.</text>
</comment>
<dbReference type="EMBL" id="BA000052">
    <property type="protein sequence ID" value="BAE60851.1"/>
    <property type="molecule type" value="Genomic_DNA"/>
</dbReference>
<dbReference type="STRING" id="510516.Q2UC64"/>
<dbReference type="EnsemblFungi" id="BAE60851">
    <property type="protein sequence ID" value="BAE60851"/>
    <property type="gene ID" value="AO090012000722"/>
</dbReference>
<dbReference type="VEuPathDB" id="FungiDB:AO090012000722"/>
<dbReference type="HOGENOM" id="CLU_003271_0_0_1"/>
<dbReference type="OMA" id="ATHVYYT"/>
<dbReference type="Proteomes" id="UP000006564">
    <property type="component" value="Chromosome 4"/>
</dbReference>
<dbReference type="GO" id="GO:0005886">
    <property type="term" value="C:plasma membrane"/>
    <property type="evidence" value="ECO:0007669"/>
    <property type="project" value="TreeGrafter"/>
</dbReference>
<dbReference type="GO" id="GO:0072659">
    <property type="term" value="P:protein localization to plasma membrane"/>
    <property type="evidence" value="ECO:0007669"/>
    <property type="project" value="InterPro"/>
</dbReference>
<dbReference type="InterPro" id="IPR016024">
    <property type="entry name" value="ARM-type_fold"/>
</dbReference>
<dbReference type="InterPro" id="IPR039786">
    <property type="entry name" value="EFR3"/>
</dbReference>
<dbReference type="InterPro" id="IPR049150">
    <property type="entry name" value="EFR3_HEAT-like_rpt"/>
</dbReference>
<dbReference type="PANTHER" id="PTHR47766">
    <property type="entry name" value="PROTEIN EFR3"/>
    <property type="match status" value="1"/>
</dbReference>
<dbReference type="PANTHER" id="PTHR47766:SF1">
    <property type="entry name" value="PROTEIN EFR3"/>
    <property type="match status" value="1"/>
</dbReference>
<dbReference type="Pfam" id="PF21072">
    <property type="entry name" value="EFR3"/>
    <property type="match status" value="1"/>
</dbReference>
<dbReference type="SUPFAM" id="SSF48371">
    <property type="entry name" value="ARM repeat"/>
    <property type="match status" value="1"/>
</dbReference>
<evidence type="ECO:0000256" key="1">
    <source>
        <dbReference type="SAM" id="MobiDB-lite"/>
    </source>
</evidence>
<evidence type="ECO:0000305" key="2"/>
<name>EFR3_ASPOR</name>